<comment type="function">
    <text evidence="1">Part of a complex that catalyzes the reversible cleavage of acetyl-CoA, allowing growth on acetate as sole source of carbon and energy. Probably maintains the overall quaternary structure of the ACDS complex.</text>
</comment>
<comment type="pathway">
    <text evidence="1">One-carbon metabolism; methanogenesis from acetate.</text>
</comment>
<comment type="subunit">
    <text evidence="1">Heterodimer of delta and gamma chains. The ACDS complex is made up of alpha, epsilon, beta, gamma and delta chains with a probable stoichiometry of (alpha(2)epsilon(2))(4)-beta(8)-(gamma(1)delta(1))(8).</text>
</comment>
<comment type="similarity">
    <text evidence="1">Belongs to the CdhD family.</text>
</comment>
<reference key="1">
    <citation type="journal article" date="2002" name="J. Mol. Microbiol. Biotechnol.">
        <title>The genome of Methanosarcina mazei: evidence for lateral gene transfer between Bacteria and Archaea.</title>
        <authorList>
            <person name="Deppenmeier U."/>
            <person name="Johann A."/>
            <person name="Hartsch T."/>
            <person name="Merkl R."/>
            <person name="Schmitz R.A."/>
            <person name="Martinez-Arias R."/>
            <person name="Henne A."/>
            <person name="Wiezer A."/>
            <person name="Baeumer S."/>
            <person name="Jacobi C."/>
            <person name="Brueggemann H."/>
            <person name="Lienard T."/>
            <person name="Christmann A."/>
            <person name="Boemecke M."/>
            <person name="Steckel S."/>
            <person name="Bhattacharyya A."/>
            <person name="Lykidis A."/>
            <person name="Overbeek R."/>
            <person name="Klenk H.-P."/>
            <person name="Gunsalus R.P."/>
            <person name="Fritz H.-J."/>
            <person name="Gottschalk G."/>
        </authorList>
    </citation>
    <scope>NUCLEOTIDE SEQUENCE [LARGE SCALE GENOMIC DNA]</scope>
    <source>
        <strain>ATCC BAA-159 / DSM 3647 / Goe1 / Go1 / JCM 11833 / OCM 88</strain>
    </source>
</reference>
<evidence type="ECO:0000255" key="1">
    <source>
        <dbReference type="HAMAP-Rule" id="MF_01135"/>
    </source>
</evidence>
<organism>
    <name type="scientific">Methanosarcina mazei (strain ATCC BAA-159 / DSM 3647 / Goe1 / Go1 / JCM 11833 / OCM 88)</name>
    <name type="common">Methanosarcina frisia</name>
    <dbReference type="NCBI Taxonomy" id="192952"/>
    <lineage>
        <taxon>Archaea</taxon>
        <taxon>Methanobacteriati</taxon>
        <taxon>Methanobacteriota</taxon>
        <taxon>Stenosarchaea group</taxon>
        <taxon>Methanomicrobia</taxon>
        <taxon>Methanosarcinales</taxon>
        <taxon>Methanosarcinaceae</taxon>
        <taxon>Methanosarcina</taxon>
    </lineage>
</organism>
<keyword id="KW-0484">Methanogenesis</keyword>
<dbReference type="EMBL" id="AE008384">
    <property type="protein sequence ID" value="AAM30384.1"/>
    <property type="molecule type" value="Genomic_DNA"/>
</dbReference>
<dbReference type="EMBL" id="AE008384">
    <property type="protein sequence ID" value="AAM31781.1"/>
    <property type="molecule type" value="Genomic_DNA"/>
</dbReference>
<dbReference type="SMR" id="Q8PRQ5"/>
<dbReference type="KEGG" id="mma:MM_0688"/>
<dbReference type="KEGG" id="mma:MM_2085"/>
<dbReference type="PATRIC" id="fig|192952.21.peg.2393"/>
<dbReference type="eggNOG" id="arCOG01980">
    <property type="taxonomic scope" value="Archaea"/>
</dbReference>
<dbReference type="HOGENOM" id="CLU_040403_0_0_2"/>
<dbReference type="UniPathway" id="UPA00642"/>
<dbReference type="Proteomes" id="UP000000595">
    <property type="component" value="Chromosome"/>
</dbReference>
<dbReference type="GO" id="GO:0019385">
    <property type="term" value="P:methanogenesis, from acetate"/>
    <property type="evidence" value="ECO:0007669"/>
    <property type="project" value="UniProtKB-UniRule"/>
</dbReference>
<dbReference type="GO" id="GO:0006730">
    <property type="term" value="P:one-carbon metabolic process"/>
    <property type="evidence" value="ECO:0007669"/>
    <property type="project" value="InterPro"/>
</dbReference>
<dbReference type="FunFam" id="3.20.20.20:FF:000009">
    <property type="entry name" value="Acetyl-CoA decarbonylase/synthase complex subunit delta"/>
    <property type="match status" value="1"/>
</dbReference>
<dbReference type="Gene3D" id="3.20.20.20">
    <property type="entry name" value="Dihydropteroate synthase-like"/>
    <property type="match status" value="1"/>
</dbReference>
<dbReference type="HAMAP" id="MF_01135">
    <property type="entry name" value="CdhD"/>
    <property type="match status" value="1"/>
</dbReference>
<dbReference type="InterPro" id="IPR016041">
    <property type="entry name" value="Ac-CoA_synth_d_su_TIM-brl"/>
</dbReference>
<dbReference type="InterPro" id="IPR051069">
    <property type="entry name" value="ACDS_complex_subunit"/>
</dbReference>
<dbReference type="InterPro" id="IPR004486">
    <property type="entry name" value="CO_DH/Ac-CoA_synth_dsu"/>
</dbReference>
<dbReference type="InterPro" id="IPR011005">
    <property type="entry name" value="Dihydropteroate_synth-like_sf"/>
</dbReference>
<dbReference type="NCBIfam" id="TIGR00381">
    <property type="entry name" value="cdhD"/>
    <property type="match status" value="1"/>
</dbReference>
<dbReference type="NCBIfam" id="NF003375">
    <property type="entry name" value="PRK04452.1-1"/>
    <property type="match status" value="1"/>
</dbReference>
<dbReference type="PANTHER" id="PTHR36214">
    <property type="match status" value="1"/>
</dbReference>
<dbReference type="PANTHER" id="PTHR36214:SF5">
    <property type="entry name" value="ACETYL-COA DECARBONYLASE_SYNTHASE COMPLEX SUBUNIT DELTA"/>
    <property type="match status" value="1"/>
</dbReference>
<dbReference type="Pfam" id="PF03599">
    <property type="entry name" value="CdhD"/>
    <property type="match status" value="1"/>
</dbReference>
<dbReference type="SUPFAM" id="SSF51717">
    <property type="entry name" value="Dihydropteroate synthetase-like"/>
    <property type="match status" value="1"/>
</dbReference>
<feature type="chain" id="PRO_0000155114" description="Acetyl-CoA decarbonylase/synthase complex subunit delta">
    <location>
        <begin position="1"/>
        <end position="436"/>
    </location>
</feature>
<proteinExistence type="inferred from homology"/>
<accession>Q8PRQ5</accession>
<name>ACDD_METMA</name>
<protein>
    <recommendedName>
        <fullName evidence="1">Acetyl-CoA decarbonylase/synthase complex subunit delta</fullName>
        <shortName evidence="1">ACDS complex subunit delta</shortName>
    </recommendedName>
    <alternativeName>
        <fullName evidence="1">Corrinoid/iron-sulfur component small subunit</fullName>
    </alternativeName>
</protein>
<sequence length="436" mass="46934">MAKKMKLSDITNMFAGMDVEALEGVTIEGDIEIDLGGLGGGFDPMLAAALGQESAVLAQHFARIAGMFGYPVGIGAPAAPAISPALAAPKLKDLIPAKFDVANIAEWATQIQEVPIGNTSADGGSRGKRVLVGGEKALPFFPDAPMPNRNQVTIDVFDMRIGLAKAVKENYDEVMDSPGEWAKKNVEKFNADMITIHLISTDPLVKDTPPKEAAKTVEEVLQAVDVPIAIGGSGNPQKDPEVLARAAEVAEGERCLLASASLNLDYAAIAEAALKYDHDVLSWTQLDMNAQKELNRKLMKQCNVPRDRIIMDPTTAALGYGLDYAYTNMERIRLAALMGDDELTFPMSSGTTNAWGARESWMVGSPLKEDSDWGPREYRGPIWEIVTGLSLAIAGNDLFMMMHPTSVAVLKQITQTLFGTIDTEQVDIANWIGAEV</sequence>
<gene>
    <name evidence="1" type="primary">cdhD1</name>
    <name type="ordered locus">MM_0688</name>
</gene>
<gene>
    <name evidence="1" type="primary">cdhD2</name>
    <name type="ordered locus">MM_2085</name>
</gene>